<name>YHY5_SCHPO</name>
<sequence length="150" mass="16384">MNDDSSSSSSGDSSDGSSGTTIVQTNSYPWSAYGRWVVVIICIAALIFFFFIIGIINRRRTKKGQATIPFTNFYPLTAPPPYTAEPEARYNSTIHNPMPPMSQAYRPPPTEPPTVPAYETSSEFPPPAYPEAAATSDAAFRKYDGYAKLG</sequence>
<evidence type="ECO:0000256" key="1">
    <source>
        <dbReference type="SAM" id="MobiDB-lite"/>
    </source>
</evidence>
<accession>O60154</accession>
<proteinExistence type="predicted"/>
<feature type="chain" id="PRO_0000116784" description="Uncharacterized protein C19C7.05">
    <location>
        <begin position="1"/>
        <end position="150"/>
    </location>
</feature>
<feature type="region of interest" description="Disordered" evidence="1">
    <location>
        <begin position="1"/>
        <end position="21"/>
    </location>
</feature>
<feature type="region of interest" description="Disordered" evidence="1">
    <location>
        <begin position="85"/>
        <end position="131"/>
    </location>
</feature>
<feature type="compositionally biased region" description="Low complexity" evidence="1">
    <location>
        <begin position="1"/>
        <end position="19"/>
    </location>
</feature>
<feature type="compositionally biased region" description="Pro residues" evidence="1">
    <location>
        <begin position="106"/>
        <end position="115"/>
    </location>
</feature>
<organism>
    <name type="scientific">Schizosaccharomyces pombe (strain 972 / ATCC 24843)</name>
    <name type="common">Fission yeast</name>
    <dbReference type="NCBI Taxonomy" id="284812"/>
    <lineage>
        <taxon>Eukaryota</taxon>
        <taxon>Fungi</taxon>
        <taxon>Dikarya</taxon>
        <taxon>Ascomycota</taxon>
        <taxon>Taphrinomycotina</taxon>
        <taxon>Schizosaccharomycetes</taxon>
        <taxon>Schizosaccharomycetales</taxon>
        <taxon>Schizosaccharomycetaceae</taxon>
        <taxon>Schizosaccharomyces</taxon>
    </lineage>
</organism>
<dbReference type="EMBL" id="CU329671">
    <property type="protein sequence ID" value="CAA19573.1"/>
    <property type="molecule type" value="Genomic_DNA"/>
</dbReference>
<dbReference type="PIR" id="T39811">
    <property type="entry name" value="T39811"/>
</dbReference>
<dbReference type="SMR" id="O60154"/>
<dbReference type="BioGRID" id="277330">
    <property type="interactions" value="8"/>
</dbReference>
<dbReference type="FunCoup" id="O60154">
    <property type="interactions" value="410"/>
</dbReference>
<dbReference type="STRING" id="284812.O60154"/>
<dbReference type="iPTMnet" id="O60154"/>
<dbReference type="PaxDb" id="4896-SPBC19C7.05.1"/>
<dbReference type="EnsemblFungi" id="SPBC19C7.05.1">
    <property type="protein sequence ID" value="SPBC19C7.05.1:pep"/>
    <property type="gene ID" value="SPBC19C7.05"/>
</dbReference>
<dbReference type="KEGG" id="spo:2540811"/>
<dbReference type="PomBase" id="SPBC19C7.05"/>
<dbReference type="VEuPathDB" id="FungiDB:SPBC19C7.05"/>
<dbReference type="HOGENOM" id="CLU_1897429_0_0_1"/>
<dbReference type="InParanoid" id="O60154"/>
<dbReference type="OMA" id="YPEAMAS"/>
<dbReference type="PRO" id="PR:O60154"/>
<dbReference type="Proteomes" id="UP000002485">
    <property type="component" value="Chromosome II"/>
</dbReference>
<dbReference type="GO" id="GO:0005794">
    <property type="term" value="C:Golgi apparatus"/>
    <property type="evidence" value="ECO:0007005"/>
    <property type="project" value="PomBase"/>
</dbReference>
<dbReference type="GO" id="GO:0043231">
    <property type="term" value="C:intracellular membrane-bounded organelle"/>
    <property type="evidence" value="ECO:0000318"/>
    <property type="project" value="GO_Central"/>
</dbReference>
<dbReference type="GO" id="GO:0005886">
    <property type="term" value="C:plasma membrane"/>
    <property type="evidence" value="ECO:0000266"/>
    <property type="project" value="PomBase"/>
</dbReference>
<dbReference type="GO" id="GO:0043495">
    <property type="term" value="F:protein-membrane adaptor activity"/>
    <property type="evidence" value="ECO:0000266"/>
    <property type="project" value="PomBase"/>
</dbReference>
<dbReference type="GO" id="GO:0006897">
    <property type="term" value="P:endocytosis"/>
    <property type="evidence" value="ECO:0000266"/>
    <property type="project" value="PomBase"/>
</dbReference>
<dbReference type="GO" id="GO:0016192">
    <property type="term" value="P:vesicle-mediated transport"/>
    <property type="evidence" value="ECO:0000318"/>
    <property type="project" value="GO_Central"/>
</dbReference>
<dbReference type="InterPro" id="IPR020999">
    <property type="entry name" value="Chitin_synth_reg_RCR"/>
</dbReference>
<dbReference type="PANTHER" id="PTHR28187">
    <property type="entry name" value="PROTEIN RCR1-RELATED"/>
    <property type="match status" value="1"/>
</dbReference>
<dbReference type="PANTHER" id="PTHR28187:SF1">
    <property type="entry name" value="PROTEIN RCR1-RELATED"/>
    <property type="match status" value="1"/>
</dbReference>
<dbReference type="Pfam" id="PF12273">
    <property type="entry name" value="RCR"/>
    <property type="match status" value="1"/>
</dbReference>
<reference key="1">
    <citation type="journal article" date="2002" name="Nature">
        <title>The genome sequence of Schizosaccharomyces pombe.</title>
        <authorList>
            <person name="Wood V."/>
            <person name="Gwilliam R."/>
            <person name="Rajandream M.A."/>
            <person name="Lyne M.H."/>
            <person name="Lyne R."/>
            <person name="Stewart A."/>
            <person name="Sgouros J.G."/>
            <person name="Peat N."/>
            <person name="Hayles J."/>
            <person name="Baker S.G."/>
            <person name="Basham D."/>
            <person name="Bowman S."/>
            <person name="Brooks K."/>
            <person name="Brown D."/>
            <person name="Brown S."/>
            <person name="Chillingworth T."/>
            <person name="Churcher C.M."/>
            <person name="Collins M."/>
            <person name="Connor R."/>
            <person name="Cronin A."/>
            <person name="Davis P."/>
            <person name="Feltwell T."/>
            <person name="Fraser A."/>
            <person name="Gentles S."/>
            <person name="Goble A."/>
            <person name="Hamlin N."/>
            <person name="Harris D.E."/>
            <person name="Hidalgo J."/>
            <person name="Hodgson G."/>
            <person name="Holroyd S."/>
            <person name="Hornsby T."/>
            <person name="Howarth S."/>
            <person name="Huckle E.J."/>
            <person name="Hunt S."/>
            <person name="Jagels K."/>
            <person name="James K.D."/>
            <person name="Jones L."/>
            <person name="Jones M."/>
            <person name="Leather S."/>
            <person name="McDonald S."/>
            <person name="McLean J."/>
            <person name="Mooney P."/>
            <person name="Moule S."/>
            <person name="Mungall K.L."/>
            <person name="Murphy L.D."/>
            <person name="Niblett D."/>
            <person name="Odell C."/>
            <person name="Oliver K."/>
            <person name="O'Neil S."/>
            <person name="Pearson D."/>
            <person name="Quail M.A."/>
            <person name="Rabbinowitsch E."/>
            <person name="Rutherford K.M."/>
            <person name="Rutter S."/>
            <person name="Saunders D."/>
            <person name="Seeger K."/>
            <person name="Sharp S."/>
            <person name="Skelton J."/>
            <person name="Simmonds M.N."/>
            <person name="Squares R."/>
            <person name="Squares S."/>
            <person name="Stevens K."/>
            <person name="Taylor K."/>
            <person name="Taylor R.G."/>
            <person name="Tivey A."/>
            <person name="Walsh S.V."/>
            <person name="Warren T."/>
            <person name="Whitehead S."/>
            <person name="Woodward J.R."/>
            <person name="Volckaert G."/>
            <person name="Aert R."/>
            <person name="Robben J."/>
            <person name="Grymonprez B."/>
            <person name="Weltjens I."/>
            <person name="Vanstreels E."/>
            <person name="Rieger M."/>
            <person name="Schaefer M."/>
            <person name="Mueller-Auer S."/>
            <person name="Gabel C."/>
            <person name="Fuchs M."/>
            <person name="Duesterhoeft A."/>
            <person name="Fritzc C."/>
            <person name="Holzer E."/>
            <person name="Moestl D."/>
            <person name="Hilbert H."/>
            <person name="Borzym K."/>
            <person name="Langer I."/>
            <person name="Beck A."/>
            <person name="Lehrach H."/>
            <person name="Reinhardt R."/>
            <person name="Pohl T.M."/>
            <person name="Eger P."/>
            <person name="Zimmermann W."/>
            <person name="Wedler H."/>
            <person name="Wambutt R."/>
            <person name="Purnelle B."/>
            <person name="Goffeau A."/>
            <person name="Cadieu E."/>
            <person name="Dreano S."/>
            <person name="Gloux S."/>
            <person name="Lelaure V."/>
            <person name="Mottier S."/>
            <person name="Galibert F."/>
            <person name="Aves S.J."/>
            <person name="Xiang Z."/>
            <person name="Hunt C."/>
            <person name="Moore K."/>
            <person name="Hurst S.M."/>
            <person name="Lucas M."/>
            <person name="Rochet M."/>
            <person name="Gaillardin C."/>
            <person name="Tallada V.A."/>
            <person name="Garzon A."/>
            <person name="Thode G."/>
            <person name="Daga R.R."/>
            <person name="Cruzado L."/>
            <person name="Jimenez J."/>
            <person name="Sanchez M."/>
            <person name="del Rey F."/>
            <person name="Benito J."/>
            <person name="Dominguez A."/>
            <person name="Revuelta J.L."/>
            <person name="Moreno S."/>
            <person name="Armstrong J."/>
            <person name="Forsburg S.L."/>
            <person name="Cerutti L."/>
            <person name="Lowe T."/>
            <person name="McCombie W.R."/>
            <person name="Paulsen I."/>
            <person name="Potashkin J."/>
            <person name="Shpakovski G.V."/>
            <person name="Ussery D."/>
            <person name="Barrell B.G."/>
            <person name="Nurse P."/>
        </authorList>
    </citation>
    <scope>NUCLEOTIDE SEQUENCE [LARGE SCALE GENOMIC DNA]</scope>
    <source>
        <strain>972 / ATCC 24843</strain>
    </source>
</reference>
<keyword id="KW-1185">Reference proteome</keyword>
<protein>
    <recommendedName>
        <fullName>Uncharacterized protein C19C7.05</fullName>
    </recommendedName>
</protein>
<gene>
    <name type="ORF">SPBC19C7.05</name>
</gene>